<keyword id="KW-0143">Chaperone</keyword>
<keyword id="KW-0963">Cytoplasm</keyword>
<keyword id="KW-0653">Protein transport</keyword>
<keyword id="KW-1185">Reference proteome</keyword>
<keyword id="KW-0811">Translocation</keyword>
<keyword id="KW-0813">Transport</keyword>
<evidence type="ECO:0000255" key="1">
    <source>
        <dbReference type="HAMAP-Rule" id="MF_00821"/>
    </source>
</evidence>
<reference key="1">
    <citation type="journal article" date="2001" name="Science">
        <title>The genome of the natural genetic engineer Agrobacterium tumefaciens C58.</title>
        <authorList>
            <person name="Wood D.W."/>
            <person name="Setubal J.C."/>
            <person name="Kaul R."/>
            <person name="Monks D.E."/>
            <person name="Kitajima J.P."/>
            <person name="Okura V.K."/>
            <person name="Zhou Y."/>
            <person name="Chen L."/>
            <person name="Wood G.E."/>
            <person name="Almeida N.F. Jr."/>
            <person name="Woo L."/>
            <person name="Chen Y."/>
            <person name="Paulsen I.T."/>
            <person name="Eisen J.A."/>
            <person name="Karp P.D."/>
            <person name="Bovee D. Sr."/>
            <person name="Chapman P."/>
            <person name="Clendenning J."/>
            <person name="Deatherage G."/>
            <person name="Gillet W."/>
            <person name="Grant C."/>
            <person name="Kutyavin T."/>
            <person name="Levy R."/>
            <person name="Li M.-J."/>
            <person name="McClelland E."/>
            <person name="Palmieri A."/>
            <person name="Raymond C."/>
            <person name="Rouse G."/>
            <person name="Saenphimmachak C."/>
            <person name="Wu Z."/>
            <person name="Romero P."/>
            <person name="Gordon D."/>
            <person name="Zhang S."/>
            <person name="Yoo H."/>
            <person name="Tao Y."/>
            <person name="Biddle P."/>
            <person name="Jung M."/>
            <person name="Krespan W."/>
            <person name="Perry M."/>
            <person name="Gordon-Kamm B."/>
            <person name="Liao L."/>
            <person name="Kim S."/>
            <person name="Hendrick C."/>
            <person name="Zhao Z.-Y."/>
            <person name="Dolan M."/>
            <person name="Chumley F."/>
            <person name="Tingey S.V."/>
            <person name="Tomb J.-F."/>
            <person name="Gordon M.P."/>
            <person name="Olson M.V."/>
            <person name="Nester E.W."/>
        </authorList>
    </citation>
    <scope>NUCLEOTIDE SEQUENCE [LARGE SCALE GENOMIC DNA]</scope>
    <source>
        <strain>C58 / ATCC 33970</strain>
    </source>
</reference>
<reference key="2">
    <citation type="journal article" date="2001" name="Science">
        <title>Genome sequence of the plant pathogen and biotechnology agent Agrobacterium tumefaciens C58.</title>
        <authorList>
            <person name="Goodner B."/>
            <person name="Hinkle G."/>
            <person name="Gattung S."/>
            <person name="Miller N."/>
            <person name="Blanchard M."/>
            <person name="Qurollo B."/>
            <person name="Goldman B.S."/>
            <person name="Cao Y."/>
            <person name="Askenazi M."/>
            <person name="Halling C."/>
            <person name="Mullin L."/>
            <person name="Houmiel K."/>
            <person name="Gordon J."/>
            <person name="Vaudin M."/>
            <person name="Iartchouk O."/>
            <person name="Epp A."/>
            <person name="Liu F."/>
            <person name="Wollam C."/>
            <person name="Allinger M."/>
            <person name="Doughty D."/>
            <person name="Scott C."/>
            <person name="Lappas C."/>
            <person name="Markelz B."/>
            <person name="Flanagan C."/>
            <person name="Crowell C."/>
            <person name="Gurson J."/>
            <person name="Lomo C."/>
            <person name="Sear C."/>
            <person name="Strub G."/>
            <person name="Cielo C."/>
            <person name="Slater S."/>
        </authorList>
    </citation>
    <scope>NUCLEOTIDE SEQUENCE [LARGE SCALE GENOMIC DNA]</scope>
    <source>
        <strain>C58 / ATCC 33970</strain>
    </source>
</reference>
<organism>
    <name type="scientific">Agrobacterium fabrum (strain C58 / ATCC 33970)</name>
    <name type="common">Agrobacterium tumefaciens (strain C58)</name>
    <dbReference type="NCBI Taxonomy" id="176299"/>
    <lineage>
        <taxon>Bacteria</taxon>
        <taxon>Pseudomonadati</taxon>
        <taxon>Pseudomonadota</taxon>
        <taxon>Alphaproteobacteria</taxon>
        <taxon>Hyphomicrobiales</taxon>
        <taxon>Rhizobiaceae</taxon>
        <taxon>Rhizobium/Agrobacterium group</taxon>
        <taxon>Agrobacterium</taxon>
        <taxon>Agrobacterium tumefaciens complex</taxon>
    </lineage>
</organism>
<gene>
    <name evidence="1" type="primary">secB</name>
    <name type="ordered locus">Atu0006</name>
    <name type="ORF">AGR_C_9</name>
</gene>
<proteinExistence type="inferred from homology"/>
<protein>
    <recommendedName>
        <fullName evidence="1">Protein-export protein SecB</fullName>
    </recommendedName>
</protein>
<accession>Q8UJC2</accession>
<accession>Q7D2D2</accession>
<dbReference type="EMBL" id="AE007869">
    <property type="protein sequence ID" value="AAK85831.1"/>
    <property type="molecule type" value="Genomic_DNA"/>
</dbReference>
<dbReference type="PIR" id="AG2577">
    <property type="entry name" value="AG2577"/>
</dbReference>
<dbReference type="PIR" id="F97359">
    <property type="entry name" value="F97359"/>
</dbReference>
<dbReference type="RefSeq" id="NP_353046.1">
    <property type="nucleotide sequence ID" value="NC_003062.2"/>
</dbReference>
<dbReference type="RefSeq" id="WP_010970595.1">
    <property type="nucleotide sequence ID" value="NC_003062.2"/>
</dbReference>
<dbReference type="SMR" id="Q8UJC2"/>
<dbReference type="STRING" id="176299.Atu0006"/>
<dbReference type="EnsemblBacteria" id="AAK85831">
    <property type="protein sequence ID" value="AAK85831"/>
    <property type="gene ID" value="Atu0006"/>
</dbReference>
<dbReference type="GeneID" id="1132044"/>
<dbReference type="KEGG" id="atu:Atu0006"/>
<dbReference type="PATRIC" id="fig|176299.10.peg.7"/>
<dbReference type="eggNOG" id="COG1952">
    <property type="taxonomic scope" value="Bacteria"/>
</dbReference>
<dbReference type="HOGENOM" id="CLU_111574_0_0_5"/>
<dbReference type="OrthoDB" id="9795145at2"/>
<dbReference type="PhylomeDB" id="Q8UJC2"/>
<dbReference type="BioCyc" id="AGRO:ATU0006-MONOMER"/>
<dbReference type="Proteomes" id="UP000000813">
    <property type="component" value="Chromosome circular"/>
</dbReference>
<dbReference type="GO" id="GO:0005737">
    <property type="term" value="C:cytoplasm"/>
    <property type="evidence" value="ECO:0007669"/>
    <property type="project" value="UniProtKB-SubCell"/>
</dbReference>
<dbReference type="GO" id="GO:0051082">
    <property type="term" value="F:unfolded protein binding"/>
    <property type="evidence" value="ECO:0007669"/>
    <property type="project" value="InterPro"/>
</dbReference>
<dbReference type="GO" id="GO:0006457">
    <property type="term" value="P:protein folding"/>
    <property type="evidence" value="ECO:0000250"/>
    <property type="project" value="PAMGO_GAT"/>
</dbReference>
<dbReference type="GO" id="GO:0009306">
    <property type="term" value="P:protein secretion"/>
    <property type="evidence" value="ECO:0000250"/>
    <property type="project" value="PAMGO_GAT"/>
</dbReference>
<dbReference type="GO" id="GO:0051262">
    <property type="term" value="P:protein tetramerization"/>
    <property type="evidence" value="ECO:0007669"/>
    <property type="project" value="InterPro"/>
</dbReference>
<dbReference type="FunFam" id="3.10.420.10:FF:000002">
    <property type="entry name" value="Protein-export protein SecB"/>
    <property type="match status" value="1"/>
</dbReference>
<dbReference type="Gene3D" id="3.10.420.10">
    <property type="entry name" value="SecB-like"/>
    <property type="match status" value="1"/>
</dbReference>
<dbReference type="HAMAP" id="MF_00821">
    <property type="entry name" value="SecB"/>
    <property type="match status" value="1"/>
</dbReference>
<dbReference type="InterPro" id="IPR003708">
    <property type="entry name" value="SecB"/>
</dbReference>
<dbReference type="InterPro" id="IPR035958">
    <property type="entry name" value="SecB-like_sf"/>
</dbReference>
<dbReference type="NCBIfam" id="NF004392">
    <property type="entry name" value="PRK05751.1-3"/>
    <property type="match status" value="1"/>
</dbReference>
<dbReference type="NCBIfam" id="TIGR00809">
    <property type="entry name" value="secB"/>
    <property type="match status" value="1"/>
</dbReference>
<dbReference type="PANTHER" id="PTHR36918">
    <property type="match status" value="1"/>
</dbReference>
<dbReference type="PANTHER" id="PTHR36918:SF1">
    <property type="entry name" value="PROTEIN-EXPORT PROTEIN SECB"/>
    <property type="match status" value="1"/>
</dbReference>
<dbReference type="Pfam" id="PF02556">
    <property type="entry name" value="SecB"/>
    <property type="match status" value="1"/>
</dbReference>
<dbReference type="PRINTS" id="PR01594">
    <property type="entry name" value="SECBCHAPRONE"/>
</dbReference>
<dbReference type="SUPFAM" id="SSF54611">
    <property type="entry name" value="SecB-like"/>
    <property type="match status" value="1"/>
</dbReference>
<comment type="function">
    <text evidence="1">One of the proteins required for the normal export of preproteins out of the cell cytoplasm. It is a molecular chaperone that binds to a subset of precursor proteins, maintaining them in a translocation-competent state. It also specifically binds to its receptor SecA.</text>
</comment>
<comment type="subunit">
    <text evidence="1">Homotetramer, a dimer of dimers. One homotetramer interacts with 1 SecA dimer.</text>
</comment>
<comment type="subcellular location">
    <subcellularLocation>
        <location evidence="1">Cytoplasm</location>
    </subcellularLocation>
</comment>
<comment type="similarity">
    <text evidence="1">Belongs to the SecB family.</text>
</comment>
<feature type="chain" id="PRO_0000055342" description="Protein-export protein SecB">
    <location>
        <begin position="1"/>
        <end position="160"/>
    </location>
</feature>
<sequence>MTAENGAQGAVSPSLNILAQYIKDLSFENPGAPRSLQGRENAPAININVNVNANPISGSDFDVVLTLNAEAKDGDKILFAAELVYGGVFRIAGFPQEHMLPVLFIECPRLLFPFARQIIADVTRNGGFPPLMIDPIDFSQMFAQRVAEEQAKAQVQAVPN</sequence>
<name>SECB_AGRFC</name>